<gene>
    <name type="ordered locus">Mal-002</name>
</gene>
<feature type="chain" id="PRO_0000373365" description="Inner membrane protein p22">
    <location>
        <begin position="1"/>
        <end position="170"/>
    </location>
</feature>
<feature type="topological domain" description="Intravirion" evidence="2">
    <location>
        <begin position="1"/>
        <end position="3"/>
    </location>
</feature>
<feature type="transmembrane region" description="Helical" evidence="2">
    <location>
        <begin position="4"/>
        <end position="24"/>
    </location>
</feature>
<feature type="topological domain" description="Virion surface" evidence="2">
    <location>
        <begin position="25"/>
        <end position="170"/>
    </location>
</feature>
<accession>P0C9W1</accession>
<reference key="1">
    <citation type="submission" date="2003-03" db="EMBL/GenBank/DDBJ databases">
        <title>African swine fever virus genomes.</title>
        <authorList>
            <person name="Kutish G.F."/>
            <person name="Rock D.L."/>
        </authorList>
    </citation>
    <scope>NUCLEOTIDE SEQUENCE [LARGE SCALE GENOMIC DNA]</scope>
</reference>
<evidence type="ECO:0000250" key="1">
    <source>
        <dbReference type="UniProtKB" id="P23169"/>
    </source>
</evidence>
<evidence type="ECO:0000255" key="2"/>
<evidence type="ECO:0000305" key="3"/>
<sequence length="170" mass="19522">MSTLLIALIALIVLLIIILVVFLYYKKQQPPKKVCKVDKDCGSREHCVRGTCSSLSCLDAVKMDKRDVKMDSKISSCKFTPNFYHFTDTAAEQEFGKTWHSIKITPSPGESHTSQEICERYCLWGTDDCTGWEYFGDEKNGTCNIYNNPYLALKYTKDHVLYLPRNHKYA</sequence>
<keyword id="KW-0244">Early protein</keyword>
<keyword id="KW-1032">Host cell membrane</keyword>
<keyword id="KW-1043">Host membrane</keyword>
<keyword id="KW-0472">Membrane</keyword>
<keyword id="KW-0812">Transmembrane</keyword>
<keyword id="KW-1133">Transmembrane helix</keyword>
<keyword id="KW-0946">Virion</keyword>
<proteinExistence type="inferred from homology"/>
<name>P22_ASFM2</name>
<protein>
    <recommendedName>
        <fullName evidence="3">Inner membrane protein p22</fullName>
    </recommendedName>
</protein>
<organismHost>
    <name type="scientific">Ornithodoros</name>
    <name type="common">relapsing fever ticks</name>
    <dbReference type="NCBI Taxonomy" id="6937"/>
</organismHost>
<organismHost>
    <name type="scientific">Phacochoerus aethiopicus</name>
    <name type="common">Warthog</name>
    <dbReference type="NCBI Taxonomy" id="85517"/>
</organismHost>
<organismHost>
    <name type="scientific">Phacochoerus africanus</name>
    <name type="common">Warthog</name>
    <dbReference type="NCBI Taxonomy" id="41426"/>
</organismHost>
<organismHost>
    <name type="scientific">Potamochoerus larvatus</name>
    <name type="common">Bushpig</name>
    <dbReference type="NCBI Taxonomy" id="273792"/>
</organismHost>
<organismHost>
    <name type="scientific">Sus scrofa</name>
    <name type="common">Pig</name>
    <dbReference type="NCBI Taxonomy" id="9823"/>
</organismHost>
<organism>
    <name type="scientific">African swine fever virus (isolate Tick/Malawi/Lil 20-1/1983)</name>
    <name type="common">ASFV</name>
    <dbReference type="NCBI Taxonomy" id="10500"/>
    <lineage>
        <taxon>Viruses</taxon>
        <taxon>Varidnaviria</taxon>
        <taxon>Bamfordvirae</taxon>
        <taxon>Nucleocytoviricota</taxon>
        <taxon>Pokkesviricetes</taxon>
        <taxon>Asfuvirales</taxon>
        <taxon>Asfarviridae</taxon>
        <taxon>Asfivirus</taxon>
        <taxon>African swine fever virus</taxon>
    </lineage>
</organism>
<dbReference type="EMBL" id="AY261361">
    <property type="status" value="NOT_ANNOTATED_CDS"/>
    <property type="molecule type" value="Genomic_DNA"/>
</dbReference>
<dbReference type="SMR" id="P0C9W1"/>
<dbReference type="Proteomes" id="UP000000860">
    <property type="component" value="Segment"/>
</dbReference>
<dbReference type="GO" id="GO:0020002">
    <property type="term" value="C:host cell plasma membrane"/>
    <property type="evidence" value="ECO:0007669"/>
    <property type="project" value="UniProtKB-SubCell"/>
</dbReference>
<dbReference type="GO" id="GO:0016020">
    <property type="term" value="C:membrane"/>
    <property type="evidence" value="ECO:0007669"/>
    <property type="project" value="UniProtKB-KW"/>
</dbReference>
<dbReference type="GO" id="GO:0055036">
    <property type="term" value="C:virion membrane"/>
    <property type="evidence" value="ECO:0007669"/>
    <property type="project" value="UniProtKB-SubCell"/>
</dbReference>
<comment type="subcellular location">
    <subcellularLocation>
        <location evidence="1">Virion membrane</location>
        <topology evidence="2">Single-pass membrane protein</topology>
    </subcellularLocation>
    <subcellularLocation>
        <location evidence="1">Host cell membrane</location>
        <topology evidence="2">Single-pass membrane protein</topology>
    </subcellularLocation>
    <text evidence="1">Part of the virion inner membrane.</text>
</comment>
<comment type="induction">
    <text evidence="3">Expressed in the late phase of the viral replicative cycle.</text>
</comment>
<comment type="similarity">
    <text evidence="3">Belongs to the asfivirus inner membrane protein p22 family.</text>
</comment>